<protein>
    <recommendedName>
        <fullName>T-cell surface glycoprotein CD1b1</fullName>
    </recommendedName>
    <cdAntigenName>CD1b-1</cdAntigenName>
</protein>
<name>CD1B1_CAVPO</name>
<feature type="signal peptide" evidence="2">
    <location>
        <begin position="1"/>
        <end position="17"/>
    </location>
</feature>
<feature type="chain" id="PRO_0000014583" description="T-cell surface glycoprotein CD1b1">
    <location>
        <begin position="18"/>
        <end position="333"/>
    </location>
</feature>
<feature type="topological domain" description="Extracellular" evidence="2">
    <location>
        <begin position="18"/>
        <end position="302"/>
    </location>
</feature>
<feature type="transmembrane region" description="Helical" evidence="2">
    <location>
        <begin position="303"/>
        <end position="323"/>
    </location>
</feature>
<feature type="topological domain" description="Cytoplasmic" evidence="2">
    <location>
        <begin position="324"/>
        <end position="333"/>
    </location>
</feature>
<feature type="domain" description="Ig-like">
    <location>
        <begin position="197"/>
        <end position="295"/>
    </location>
</feature>
<feature type="short sequence motif" description="Internalization signal" evidence="1">
    <location>
        <begin position="329"/>
        <end position="332"/>
    </location>
</feature>
<feature type="glycosylation site" description="N-linked (GlcNAc...) asparagine" evidence="2">
    <location>
        <position position="38"/>
    </location>
</feature>
<feature type="glycosylation site" description="N-linked (GlcNAc...) asparagine" evidence="2">
    <location>
        <position position="75"/>
    </location>
</feature>
<feature type="glycosylation site" description="N-linked (GlcNAc...) asparagine" evidence="2">
    <location>
        <position position="146"/>
    </location>
</feature>
<feature type="disulfide bond" evidence="3">
    <location>
        <begin position="120"/>
        <end position="184"/>
    </location>
</feature>
<feature type="disulfide bond" evidence="3">
    <location>
        <begin position="149"/>
        <end position="163"/>
    </location>
</feature>
<feature type="disulfide bond" evidence="3">
    <location>
        <begin position="224"/>
        <end position="279"/>
    </location>
</feature>
<comment type="function">
    <text evidence="1">Antigen-presenting protein that binds self and non-self lipid and glycolipid antigens and presents them to T-cell receptors on natural killer T-cells.</text>
</comment>
<comment type="subunit">
    <text evidence="1">Heterodimer with B2M (beta-2-microglobulin). Interacts with saposin C (By similarity).</text>
</comment>
<comment type="subcellular location">
    <subcellularLocation>
        <location evidence="1">Cell membrane</location>
        <topology evidence="1">Single-pass type I membrane protein</topology>
    </subcellularLocation>
    <subcellularLocation>
        <location evidence="1">Endosome membrane</location>
    </subcellularLocation>
    <subcellularLocation>
        <location evidence="1">Lysosome membrane</location>
    </subcellularLocation>
    <text evidence="1">Subject to intracellular trafficking between the cell membrane, endosomes and lysosomes. Localizes to cell surface lipid rafts (By similarity).</text>
</comment>
<comment type="miscellaneous">
    <text evidence="1">During protein synthesis and maturation, CD1 family members bind endogenous lipids that are replaced by lipid or glycolipid antigens when the proteins are internalized and pass through endosomes or lysosomes, before trafficking back to the cell surface. Interaction with saposin C is required for the loading of bacterial lipid antigens onto CD1B in the lysosome (By similarity).</text>
</comment>
<gene>
    <name type="primary">CD1B1</name>
</gene>
<organism>
    <name type="scientific">Cavia porcellus</name>
    <name type="common">Guinea pig</name>
    <dbReference type="NCBI Taxonomy" id="10141"/>
    <lineage>
        <taxon>Eukaryota</taxon>
        <taxon>Metazoa</taxon>
        <taxon>Chordata</taxon>
        <taxon>Craniata</taxon>
        <taxon>Vertebrata</taxon>
        <taxon>Euteleostomi</taxon>
        <taxon>Mammalia</taxon>
        <taxon>Eutheria</taxon>
        <taxon>Euarchontoglires</taxon>
        <taxon>Glires</taxon>
        <taxon>Rodentia</taxon>
        <taxon>Hystricomorpha</taxon>
        <taxon>Caviidae</taxon>
        <taxon>Cavia</taxon>
    </lineage>
</organism>
<keyword id="KW-1064">Adaptive immunity</keyword>
<keyword id="KW-1003">Cell membrane</keyword>
<keyword id="KW-1015">Disulfide bond</keyword>
<keyword id="KW-0967">Endosome</keyword>
<keyword id="KW-0325">Glycoprotein</keyword>
<keyword id="KW-0391">Immunity</keyword>
<keyword id="KW-0393">Immunoglobulin domain</keyword>
<keyword id="KW-0458">Lysosome</keyword>
<keyword id="KW-0472">Membrane</keyword>
<keyword id="KW-1185">Reference proteome</keyword>
<keyword id="KW-0732">Signal</keyword>
<keyword id="KW-0812">Transmembrane</keyword>
<keyword id="KW-1133">Transmembrane helix</keyword>
<dbReference type="EMBL" id="AF145483">
    <property type="protein sequence ID" value="AAF12738.1"/>
    <property type="molecule type" value="mRNA"/>
</dbReference>
<dbReference type="RefSeq" id="NP_001166320.1">
    <property type="nucleotide sequence ID" value="NM_001172849.1"/>
</dbReference>
<dbReference type="SMR" id="Q9QZZ2"/>
<dbReference type="STRING" id="10141.ENSCPOP00000002077"/>
<dbReference type="GlyCosmos" id="Q9QZZ2">
    <property type="glycosylation" value="3 sites, No reported glycans"/>
</dbReference>
<dbReference type="ABCD" id="Q9QZZ2">
    <property type="antibodies" value="1 sequenced antibody"/>
</dbReference>
<dbReference type="GeneID" id="100379549"/>
<dbReference type="KEGG" id="cpoc:100379549"/>
<dbReference type="CTD" id="100034038"/>
<dbReference type="eggNOG" id="ENOG502SJH6">
    <property type="taxonomic scope" value="Eukaryota"/>
</dbReference>
<dbReference type="InParanoid" id="Q9QZZ2"/>
<dbReference type="OrthoDB" id="8890485at2759"/>
<dbReference type="Proteomes" id="UP000005447">
    <property type="component" value="Unassembled WGS sequence"/>
</dbReference>
<dbReference type="GO" id="GO:0010008">
    <property type="term" value="C:endosome membrane"/>
    <property type="evidence" value="ECO:0007669"/>
    <property type="project" value="UniProtKB-SubCell"/>
</dbReference>
<dbReference type="GO" id="GO:0009897">
    <property type="term" value="C:external side of plasma membrane"/>
    <property type="evidence" value="ECO:0007669"/>
    <property type="project" value="TreeGrafter"/>
</dbReference>
<dbReference type="GO" id="GO:0005615">
    <property type="term" value="C:extracellular space"/>
    <property type="evidence" value="ECO:0007669"/>
    <property type="project" value="TreeGrafter"/>
</dbReference>
<dbReference type="GO" id="GO:0005765">
    <property type="term" value="C:lysosomal membrane"/>
    <property type="evidence" value="ECO:0007669"/>
    <property type="project" value="UniProtKB-SubCell"/>
</dbReference>
<dbReference type="GO" id="GO:0030883">
    <property type="term" value="F:endogenous lipid antigen binding"/>
    <property type="evidence" value="ECO:0007669"/>
    <property type="project" value="TreeGrafter"/>
</dbReference>
<dbReference type="GO" id="GO:0030884">
    <property type="term" value="F:exogenous lipid antigen binding"/>
    <property type="evidence" value="ECO:0007669"/>
    <property type="project" value="TreeGrafter"/>
</dbReference>
<dbReference type="GO" id="GO:0071723">
    <property type="term" value="F:lipopeptide binding"/>
    <property type="evidence" value="ECO:0007669"/>
    <property type="project" value="TreeGrafter"/>
</dbReference>
<dbReference type="GO" id="GO:0002250">
    <property type="term" value="P:adaptive immune response"/>
    <property type="evidence" value="ECO:0007669"/>
    <property type="project" value="UniProtKB-KW"/>
</dbReference>
<dbReference type="GO" id="GO:0048006">
    <property type="term" value="P:antigen processing and presentation, endogenous lipid antigen via MHC class Ib"/>
    <property type="evidence" value="ECO:0007669"/>
    <property type="project" value="TreeGrafter"/>
</dbReference>
<dbReference type="GO" id="GO:0048007">
    <property type="term" value="P:antigen processing and presentation, exogenous lipid antigen via MHC class Ib"/>
    <property type="evidence" value="ECO:0007669"/>
    <property type="project" value="TreeGrafter"/>
</dbReference>
<dbReference type="GO" id="GO:0001916">
    <property type="term" value="P:positive regulation of T cell mediated cytotoxicity"/>
    <property type="evidence" value="ECO:0007669"/>
    <property type="project" value="TreeGrafter"/>
</dbReference>
<dbReference type="CDD" id="cd21029">
    <property type="entry name" value="IgC1_CD1"/>
    <property type="match status" value="1"/>
</dbReference>
<dbReference type="FunFam" id="2.60.40.10:FF:000254">
    <property type="entry name" value="Antigen-presenting glycoprotein CD1d1"/>
    <property type="match status" value="1"/>
</dbReference>
<dbReference type="Gene3D" id="2.60.40.10">
    <property type="entry name" value="Immunoglobulins"/>
    <property type="match status" value="1"/>
</dbReference>
<dbReference type="Gene3D" id="3.30.500.10">
    <property type="entry name" value="MHC class I-like antigen recognition-like"/>
    <property type="match status" value="1"/>
</dbReference>
<dbReference type="InterPro" id="IPR007110">
    <property type="entry name" value="Ig-like_dom"/>
</dbReference>
<dbReference type="InterPro" id="IPR036179">
    <property type="entry name" value="Ig-like_dom_sf"/>
</dbReference>
<dbReference type="InterPro" id="IPR013783">
    <property type="entry name" value="Ig-like_fold"/>
</dbReference>
<dbReference type="InterPro" id="IPR003597">
    <property type="entry name" value="Ig_C1-set"/>
</dbReference>
<dbReference type="InterPro" id="IPR050208">
    <property type="entry name" value="MHC_class-I_related"/>
</dbReference>
<dbReference type="InterPro" id="IPR011161">
    <property type="entry name" value="MHC_I-like_Ag-recog"/>
</dbReference>
<dbReference type="InterPro" id="IPR037055">
    <property type="entry name" value="MHC_I-like_Ag-recog_sf"/>
</dbReference>
<dbReference type="InterPro" id="IPR011162">
    <property type="entry name" value="MHC_I/II-like_Ag-recog"/>
</dbReference>
<dbReference type="PANTHER" id="PTHR16675">
    <property type="entry name" value="MHC CLASS I-RELATED"/>
    <property type="match status" value="1"/>
</dbReference>
<dbReference type="PANTHER" id="PTHR16675:SF130">
    <property type="entry name" value="T-CELL SURFACE GLYCOPROTEIN CD1B"/>
    <property type="match status" value="1"/>
</dbReference>
<dbReference type="Pfam" id="PF07654">
    <property type="entry name" value="C1-set"/>
    <property type="match status" value="1"/>
</dbReference>
<dbReference type="Pfam" id="PF16497">
    <property type="entry name" value="MHC_I_3"/>
    <property type="match status" value="1"/>
</dbReference>
<dbReference type="SMART" id="SM00407">
    <property type="entry name" value="IGc1"/>
    <property type="match status" value="1"/>
</dbReference>
<dbReference type="SUPFAM" id="SSF48726">
    <property type="entry name" value="Immunoglobulin"/>
    <property type="match status" value="1"/>
</dbReference>
<dbReference type="SUPFAM" id="SSF54452">
    <property type="entry name" value="MHC antigen-recognition domain"/>
    <property type="match status" value="1"/>
</dbReference>
<dbReference type="PROSITE" id="PS50835">
    <property type="entry name" value="IG_LIKE"/>
    <property type="match status" value="1"/>
</dbReference>
<proteinExistence type="evidence at transcript level"/>
<reference key="1">
    <citation type="journal article" date="1999" name="J. Immunol.">
        <title>Conservation of a CD1 multigene family in the guinea pig.</title>
        <authorList>
            <person name="Dascher C.C."/>
            <person name="Hiromatsu K."/>
            <person name="Naylor J.W."/>
            <person name="Brauer P.P."/>
            <person name="Brown K.A."/>
            <person name="Storey J.R."/>
            <person name="Behar S.M."/>
            <person name="Kawasaki E.S."/>
            <person name="Porcelli S.A."/>
            <person name="Brenner M.B."/>
            <person name="LeClair K.P."/>
        </authorList>
    </citation>
    <scope>NUCLEOTIDE SEQUENCE [MRNA]</scope>
    <source>
        <strain>Hartley</strain>
        <strain>NIH 2</strain>
        <tissue>Thymus</tissue>
    </source>
</reference>
<accession>Q9QZZ2</accession>
<sequence>MLLVALALLAFLFPAGDTQNALQWPTSVHGIQISSFFNHTMAQSRCSGWLGNMELGSFDSDTGTIIFKKPWSKANFSNEEVLELEELFQVYMLGFIREVQERMSDFQMEYPFEIQGIAGCELISGGTIDFFLRGALEGLDFLSIKNSTCWPAPEGGTKAKKFCTLILQYKGIWDIMENLLTKTCPRYVLSVLESGKPDIQKQVKPDAWLSQGPSPGPGLLQLVCHVSGFYPKPVWVMWMRGEQEQPETQKGDVLPNADETWYLQVTLDVAAEEAAGLSCRVKHSSLEGQDIILYWGHSISIGWIILAVLVPCLIVLVLFVLWFYRRWSYEDIL</sequence>
<evidence type="ECO:0000250" key="1"/>
<evidence type="ECO:0000255" key="2"/>
<evidence type="ECO:0000255" key="3">
    <source>
        <dbReference type="PROSITE-ProRule" id="PRU00114"/>
    </source>
</evidence>